<comment type="function">
    <text evidence="3 4 9">E3 ubiquitin-protein ligase component of a retrotranslocation channel required for peroxisome organization by mediating export of the PEX5/prx-5 receptor from peroxisomes to the cytosol, thereby promoting PEX5/prx-5 recycling (Probable) (PubMed:20176933). The retrotranslocation channel is composed of PEX2/prx-2, PEX10/prx-10 and PEX12/prx-12; each subunit contributing transmembrane segments that coassemble into an open channel that specifically allows the passage of PEX5/prx-5 through the peroxisomal membrane (By similarity). PEX10/prx-10 also regulates PEX5 recycling by acting as a E3 ubiquitin-protein ligase (By similarity). When PEX5/prx-5 recycling is compromised, PEX10/prx-10 catalyzes polyubiquitination of PEX5/prx-5 during its passage through the retrotranslocation channel, leading to its degradation (By similarity).</text>
</comment>
<comment type="catalytic activity">
    <reaction evidence="3">
        <text>S-ubiquitinyl-[E2 ubiquitin-conjugating enzyme]-L-cysteine + [acceptor protein]-L-lysine = [E2 ubiquitin-conjugating enzyme]-L-cysteine + N(6)-ubiquitinyl-[acceptor protein]-L-lysine.</text>
        <dbReference type="EC" id="2.3.2.27"/>
    </reaction>
</comment>
<comment type="activity regulation">
    <text evidence="3">The E3 ubiquitin-protein ligase activity is stimulated by PEX12/prx-12.</text>
</comment>
<comment type="pathway">
    <text evidence="3">Protein modification; protein ubiquitination.</text>
</comment>
<comment type="subunit">
    <text evidence="3">Component of the PEX2-PEX10-PEX12 retrotranslocation channel.</text>
</comment>
<comment type="subcellular location">
    <subcellularLocation>
        <location evidence="3">Peroxisome membrane</location>
        <topology evidence="5">Multi-pass membrane protein</topology>
    </subcellularLocation>
</comment>
<comment type="domain">
    <text evidence="1">The three subunits of the retrotranslocation channel (PEX2/prx-2, PEX10/prx-10 and PEX12/prx-12) coassemble in the membrane into a channel with an open 10 Angstrom pore. The RING-type zinc-fingers that catalyze PEX5/prx-5 receptor ubiquitination are positioned above the pore on the cytosolic side of the complex.</text>
</comment>
<comment type="miscellaneous">
    <text evidence="7">Complex locus in which transcription results in the production of one large primary transcript that gives rise to two functionally distinct proteins, wars-2 and prx-10.</text>
</comment>
<comment type="similarity">
    <text evidence="8">Belongs to the pex2/pex10/pex12 family.</text>
</comment>
<proteinExistence type="inferred from homology"/>
<gene>
    <name evidence="10" type="primary">prx-10</name>
    <name evidence="10" type="ORF">C34E10.4</name>
</gene>
<organism>
    <name type="scientific">Caenorhabditis elegans</name>
    <dbReference type="NCBI Taxonomy" id="6239"/>
    <lineage>
        <taxon>Eukaryota</taxon>
        <taxon>Metazoa</taxon>
        <taxon>Ecdysozoa</taxon>
        <taxon>Nematoda</taxon>
        <taxon>Chromadorea</taxon>
        <taxon>Rhabditida</taxon>
        <taxon>Rhabditina</taxon>
        <taxon>Rhabditomorpha</taxon>
        <taxon>Rhabditoidea</taxon>
        <taxon>Rhabditidae</taxon>
        <taxon>Peloderinae</taxon>
        <taxon>Caenorhabditis</taxon>
    </lineage>
</organism>
<feature type="chain" id="PRO_0000441752" description="Peroxisome biogenesis factor 10" evidence="8">
    <location>
        <begin position="1"/>
        <end position="314"/>
    </location>
</feature>
<feature type="topological domain" description="Peroxisomal matrix" evidence="1">
    <location>
        <begin position="1"/>
        <end position="7"/>
    </location>
</feature>
<feature type="transmembrane region" description="Helical; Name=TM1" evidence="1">
    <location>
        <begin position="8"/>
        <end position="37"/>
    </location>
</feature>
<feature type="topological domain" description="Cytoplasmic" evidence="1">
    <location>
        <position position="38"/>
    </location>
</feature>
<feature type="transmembrane region" description="Helical; Name=TM2" evidence="1">
    <location>
        <begin position="39"/>
        <end position="60"/>
    </location>
</feature>
<feature type="topological domain" description="Peroxisomal matrix" evidence="1">
    <location>
        <begin position="61"/>
        <end position="90"/>
    </location>
</feature>
<feature type="transmembrane region" description="Helical; Name=TM3" evidence="2">
    <location>
        <begin position="91"/>
        <end position="110"/>
    </location>
</feature>
<feature type="topological domain" description="Cytoplasmic" evidence="1">
    <location>
        <begin position="111"/>
        <end position="142"/>
    </location>
</feature>
<feature type="transmembrane region" description="Helical; Name=TM4" evidence="2">
    <location>
        <begin position="143"/>
        <end position="166"/>
    </location>
</feature>
<feature type="topological domain" description="Peroxisomal matrix" evidence="1">
    <location>
        <begin position="167"/>
        <end position="197"/>
    </location>
</feature>
<feature type="transmembrane region" description="Helical; Name=TM5" evidence="1">
    <location>
        <begin position="198"/>
        <end position="218"/>
    </location>
</feature>
<feature type="topological domain" description="Cytoplasmic" evidence="1">
    <location>
        <begin position="219"/>
        <end position="314"/>
    </location>
</feature>
<feature type="zinc finger region" description="RING-type" evidence="6">
    <location>
        <begin position="255"/>
        <end position="300"/>
    </location>
</feature>
<feature type="binding site" evidence="1">
    <location>
        <position position="255"/>
    </location>
    <ligand>
        <name>Zn(2+)</name>
        <dbReference type="ChEBI" id="CHEBI:29105"/>
        <label>1</label>
    </ligand>
</feature>
<feature type="binding site" evidence="1">
    <location>
        <position position="258"/>
    </location>
    <ligand>
        <name>Zn(2+)</name>
        <dbReference type="ChEBI" id="CHEBI:29105"/>
        <label>1</label>
    </ligand>
</feature>
<feature type="binding site" evidence="1">
    <location>
        <position position="269"/>
    </location>
    <ligand>
        <name>Zn(2+)</name>
        <dbReference type="ChEBI" id="CHEBI:29105"/>
        <label>2</label>
    </ligand>
</feature>
<feature type="binding site" evidence="1">
    <location>
        <position position="271"/>
    </location>
    <ligand>
        <name>Zn(2+)</name>
        <dbReference type="ChEBI" id="CHEBI:29105"/>
        <label>2</label>
    </ligand>
</feature>
<feature type="binding site" evidence="1">
    <location>
        <position position="274"/>
    </location>
    <ligand>
        <name>Zn(2+)</name>
        <dbReference type="ChEBI" id="CHEBI:29105"/>
        <label>1</label>
    </ligand>
</feature>
<feature type="binding site" evidence="1">
    <location>
        <position position="277"/>
    </location>
    <ligand>
        <name>Zn(2+)</name>
        <dbReference type="ChEBI" id="CHEBI:29105"/>
        <label>1</label>
    </ligand>
</feature>
<feature type="binding site" evidence="1">
    <location>
        <position position="296"/>
    </location>
    <ligand>
        <name>Zn(2+)</name>
        <dbReference type="ChEBI" id="CHEBI:29105"/>
        <label>2</label>
    </ligand>
</feature>
<feature type="binding site" evidence="1">
    <location>
        <position position="299"/>
    </location>
    <ligand>
        <name>Zn(2+)</name>
        <dbReference type="ChEBI" id="CHEBI:29105"/>
        <label>2</label>
    </ligand>
</feature>
<reference key="1">
    <citation type="journal article" date="1998" name="Science">
        <title>Genome sequence of the nematode C. elegans: a platform for investigating biology.</title>
        <authorList>
            <consortium name="The C. elegans sequencing consortium"/>
        </authorList>
    </citation>
    <scope>NUCLEOTIDE SEQUENCE [LARGE SCALE GENOMIC DNA]</scope>
    <source>
        <strain>Bristol N2</strain>
    </source>
</reference>
<reference key="2">
    <citation type="journal article" date="2010" name="Proc. Natl. Acad. Sci. U.S.A.">
        <title>Genetic and dietary regulation of lipid droplet expansion in Caenorhabditis elegans.</title>
        <authorList>
            <person name="Zhang S.O."/>
            <person name="Box A.C."/>
            <person name="Xu N."/>
            <person name="Le Men J."/>
            <person name="Yu J."/>
            <person name="Guo F."/>
            <person name="Trimble R."/>
            <person name="Mak H.Y."/>
        </authorList>
    </citation>
    <scope>FUNCTION</scope>
</reference>
<dbReference type="EC" id="2.3.2.27" evidence="3"/>
<dbReference type="EMBL" id="BX284603">
    <property type="protein sequence ID" value="CCD66656.1"/>
    <property type="molecule type" value="Genomic_DNA"/>
</dbReference>
<dbReference type="RefSeq" id="NP_001021200.2">
    <property type="nucleotide sequence ID" value="NM_001026029.5"/>
</dbReference>
<dbReference type="SMR" id="C0HKD7"/>
<dbReference type="EnsemblMetazoa" id="C34E10.4a.1">
    <property type="protein sequence ID" value="C34E10.4a.1"/>
    <property type="gene ID" value="WBGene00006946"/>
</dbReference>
<dbReference type="EnsemblMetazoa" id="C34E10.4a.2">
    <property type="protein sequence ID" value="C34E10.4a.2"/>
    <property type="gene ID" value="WBGene00006946"/>
</dbReference>
<dbReference type="GeneID" id="175719"/>
<dbReference type="KEGG" id="cel:CELE_C34E10.4"/>
<dbReference type="AGR" id="WB:WBGene00006946"/>
<dbReference type="CTD" id="175719"/>
<dbReference type="WormBase" id="C34E10.4a">
    <property type="protein sequence ID" value="CE44834"/>
    <property type="gene ID" value="WBGene00006946"/>
    <property type="gene designation" value="prx-10"/>
</dbReference>
<dbReference type="GeneTree" id="ENSGT00940000153724"/>
<dbReference type="OrthoDB" id="15808at2759"/>
<dbReference type="UniPathway" id="UPA00143"/>
<dbReference type="Proteomes" id="UP000001940">
    <property type="component" value="Chromosome III"/>
</dbReference>
<dbReference type="Bgee" id="WBGene00006946">
    <property type="expression patterns" value="Expressed in germ line (C elegans) and 4 other cell types or tissues"/>
</dbReference>
<dbReference type="ExpressionAtlas" id="C0HKD7">
    <property type="expression patterns" value="baseline and differential"/>
</dbReference>
<dbReference type="GO" id="GO:0005759">
    <property type="term" value="C:mitochondrial matrix"/>
    <property type="evidence" value="ECO:0000318"/>
    <property type="project" value="GO_Central"/>
</dbReference>
<dbReference type="GO" id="GO:0005739">
    <property type="term" value="C:mitochondrion"/>
    <property type="evidence" value="ECO:0000318"/>
    <property type="project" value="GO_Central"/>
</dbReference>
<dbReference type="GO" id="GO:0005778">
    <property type="term" value="C:peroxisomal membrane"/>
    <property type="evidence" value="ECO:0007669"/>
    <property type="project" value="UniProtKB-SubCell"/>
</dbReference>
<dbReference type="GO" id="GO:0016740">
    <property type="term" value="F:transferase activity"/>
    <property type="evidence" value="ECO:0007669"/>
    <property type="project" value="UniProtKB-KW"/>
</dbReference>
<dbReference type="GO" id="GO:0004830">
    <property type="term" value="F:tryptophan-tRNA ligase activity"/>
    <property type="evidence" value="ECO:0000318"/>
    <property type="project" value="GO_Central"/>
</dbReference>
<dbReference type="GO" id="GO:0008270">
    <property type="term" value="F:zinc ion binding"/>
    <property type="evidence" value="ECO:0007669"/>
    <property type="project" value="UniProtKB-KW"/>
</dbReference>
<dbReference type="GO" id="GO:0070183">
    <property type="term" value="P:mitochondrial tryptophanyl-tRNA aminoacylation"/>
    <property type="evidence" value="ECO:0000318"/>
    <property type="project" value="GO_Central"/>
</dbReference>
<dbReference type="GO" id="GO:0016558">
    <property type="term" value="P:protein import into peroxisome matrix"/>
    <property type="evidence" value="ECO:0007669"/>
    <property type="project" value="InterPro"/>
</dbReference>
<dbReference type="GO" id="GO:0016567">
    <property type="term" value="P:protein ubiquitination"/>
    <property type="evidence" value="ECO:0007669"/>
    <property type="project" value="UniProtKB-UniPathway"/>
</dbReference>
<dbReference type="Gene3D" id="3.30.40.10">
    <property type="entry name" value="Zinc/RING finger domain, C3HC4 (zinc finger)"/>
    <property type="match status" value="1"/>
</dbReference>
<dbReference type="InterPro" id="IPR025654">
    <property type="entry name" value="PEX2/10"/>
</dbReference>
<dbReference type="InterPro" id="IPR006845">
    <property type="entry name" value="Pex_N"/>
</dbReference>
<dbReference type="InterPro" id="IPR027370">
    <property type="entry name" value="Znf-RING_euk"/>
</dbReference>
<dbReference type="InterPro" id="IPR001841">
    <property type="entry name" value="Znf_RING"/>
</dbReference>
<dbReference type="InterPro" id="IPR013083">
    <property type="entry name" value="Znf_RING/FYVE/PHD"/>
</dbReference>
<dbReference type="InterPro" id="IPR017907">
    <property type="entry name" value="Znf_RING_CS"/>
</dbReference>
<dbReference type="PANTHER" id="PTHR23350">
    <property type="entry name" value="PEROXISOME ASSEMBLY PROTEIN 10"/>
    <property type="match status" value="1"/>
</dbReference>
<dbReference type="PANTHER" id="PTHR23350:SF0">
    <property type="entry name" value="PEROXISOME BIOGENESIS FACTOR 10"/>
    <property type="match status" value="1"/>
</dbReference>
<dbReference type="Pfam" id="PF04757">
    <property type="entry name" value="Pex2_Pex12"/>
    <property type="match status" value="1"/>
</dbReference>
<dbReference type="Pfam" id="PF13445">
    <property type="entry name" value="zf-RING_UBOX"/>
    <property type="match status" value="1"/>
</dbReference>
<dbReference type="SMART" id="SM00184">
    <property type="entry name" value="RING"/>
    <property type="match status" value="1"/>
</dbReference>
<dbReference type="SUPFAM" id="SSF57850">
    <property type="entry name" value="RING/U-box"/>
    <property type="match status" value="1"/>
</dbReference>
<dbReference type="PROSITE" id="PS00518">
    <property type="entry name" value="ZF_RING_1"/>
    <property type="match status" value="1"/>
</dbReference>
<dbReference type="PROSITE" id="PS50089">
    <property type="entry name" value="ZF_RING_2"/>
    <property type="match status" value="1"/>
</dbReference>
<accession>C0HKD7</accession>
<accession>P46579</accession>
<accession>Q5TYM1</accession>
<accession>Q7Z259</accession>
<sequence length="314" mass="36002">MNTYVAEIGEIVRSQRRDEEYIEDITERLSRVSKELLGQRTWIRWFPYLKSIASTLYYTSTVVLGNQTLGEEYVHLFESNGLERTVPSIPSRISFVLLHSAFPLISNYLIQKAESTLTHPSTESFLGIPIRKNQKARQSFLDVFFWLRTKLFPQLQRAHIALFYITGAYYSIARRFTGIRFLSASAHSDIPALKVYRFLGYITLIQLAVSIGISLYSFLEQEKFNNKLKKEKKENNGGSDRNLDENSLFHPTFQCSICLENKNPSALFCGHLFCWTCIQEHAVAATSSASTSSARCPQCRLEFQPRDVTPLLNL</sequence>
<keyword id="KW-0472">Membrane</keyword>
<keyword id="KW-0479">Metal-binding</keyword>
<keyword id="KW-0576">Peroxisome</keyword>
<keyword id="KW-0962">Peroxisome biogenesis</keyword>
<keyword id="KW-0653">Protein transport</keyword>
<keyword id="KW-1185">Reference proteome</keyword>
<keyword id="KW-0808">Transferase</keyword>
<keyword id="KW-0812">Transmembrane</keyword>
<keyword id="KW-1133">Transmembrane helix</keyword>
<keyword id="KW-0813">Transport</keyword>
<keyword id="KW-0833">Ubl conjugation pathway</keyword>
<keyword id="KW-0862">Zinc</keyword>
<keyword id="KW-0863">Zinc-finger</keyword>
<protein>
    <recommendedName>
        <fullName evidence="8">Peroxisome biogenesis factor 10</fullName>
        <ecNumber evidence="3">2.3.2.27</ecNumber>
    </recommendedName>
    <alternativeName>
        <fullName evidence="8">Peroxin-10</fullName>
    </alternativeName>
</protein>
<name>PEX10_CAEEL</name>
<evidence type="ECO:0000250" key="1">
    <source>
        <dbReference type="UniProtKB" id="G2Q0E2"/>
    </source>
</evidence>
<evidence type="ECO:0000250" key="2">
    <source>
        <dbReference type="UniProtKB" id="G2Q1C9"/>
    </source>
</evidence>
<evidence type="ECO:0000250" key="3">
    <source>
        <dbReference type="UniProtKB" id="O60683"/>
    </source>
</evidence>
<evidence type="ECO:0000250" key="4">
    <source>
        <dbReference type="UniProtKB" id="Q05568"/>
    </source>
</evidence>
<evidence type="ECO:0000255" key="5"/>
<evidence type="ECO:0000255" key="6">
    <source>
        <dbReference type="PROSITE-ProRule" id="PRU00175"/>
    </source>
</evidence>
<evidence type="ECO:0000269" key="7">
    <source>
    </source>
</evidence>
<evidence type="ECO:0000305" key="8"/>
<evidence type="ECO:0000305" key="9">
    <source>
    </source>
</evidence>
<evidence type="ECO:0000312" key="10">
    <source>
        <dbReference type="WormBase" id="C34E10.4a"/>
    </source>
</evidence>